<proteinExistence type="inferred from homology"/>
<keyword id="KW-0687">Ribonucleoprotein</keyword>
<keyword id="KW-0689">Ribosomal protein</keyword>
<keyword id="KW-0694">RNA-binding</keyword>
<keyword id="KW-0699">rRNA-binding</keyword>
<gene>
    <name evidence="1" type="primary">rplD</name>
    <name type="ordered locus">ACICU_03279</name>
</gene>
<dbReference type="EMBL" id="CP000863">
    <property type="protein sequence ID" value="ACC58589.1"/>
    <property type="molecule type" value="Genomic_DNA"/>
</dbReference>
<dbReference type="RefSeq" id="WP_001050255.1">
    <property type="nucleotide sequence ID" value="NZ_CP031380.1"/>
</dbReference>
<dbReference type="SMR" id="B2HZM1"/>
<dbReference type="GeneID" id="92895316"/>
<dbReference type="KEGG" id="abc:ACICU_03279"/>
<dbReference type="HOGENOM" id="CLU_041575_5_2_6"/>
<dbReference type="Proteomes" id="UP000008839">
    <property type="component" value="Chromosome"/>
</dbReference>
<dbReference type="GO" id="GO:1990904">
    <property type="term" value="C:ribonucleoprotein complex"/>
    <property type="evidence" value="ECO:0007669"/>
    <property type="project" value="UniProtKB-KW"/>
</dbReference>
<dbReference type="GO" id="GO:0005840">
    <property type="term" value="C:ribosome"/>
    <property type="evidence" value="ECO:0007669"/>
    <property type="project" value="UniProtKB-KW"/>
</dbReference>
<dbReference type="GO" id="GO:0019843">
    <property type="term" value="F:rRNA binding"/>
    <property type="evidence" value="ECO:0007669"/>
    <property type="project" value="UniProtKB-UniRule"/>
</dbReference>
<dbReference type="GO" id="GO:0003735">
    <property type="term" value="F:structural constituent of ribosome"/>
    <property type="evidence" value="ECO:0007669"/>
    <property type="project" value="InterPro"/>
</dbReference>
<dbReference type="GO" id="GO:0006412">
    <property type="term" value="P:translation"/>
    <property type="evidence" value="ECO:0007669"/>
    <property type="project" value="UniProtKB-UniRule"/>
</dbReference>
<dbReference type="Gene3D" id="3.40.1370.10">
    <property type="match status" value="1"/>
</dbReference>
<dbReference type="HAMAP" id="MF_01328_B">
    <property type="entry name" value="Ribosomal_uL4_B"/>
    <property type="match status" value="1"/>
</dbReference>
<dbReference type="InterPro" id="IPR002136">
    <property type="entry name" value="Ribosomal_uL4"/>
</dbReference>
<dbReference type="InterPro" id="IPR013005">
    <property type="entry name" value="Ribosomal_uL4-like"/>
</dbReference>
<dbReference type="InterPro" id="IPR023574">
    <property type="entry name" value="Ribosomal_uL4_dom_sf"/>
</dbReference>
<dbReference type="NCBIfam" id="TIGR03953">
    <property type="entry name" value="rplD_bact"/>
    <property type="match status" value="1"/>
</dbReference>
<dbReference type="PANTHER" id="PTHR10746">
    <property type="entry name" value="50S RIBOSOMAL PROTEIN L4"/>
    <property type="match status" value="1"/>
</dbReference>
<dbReference type="PANTHER" id="PTHR10746:SF6">
    <property type="entry name" value="LARGE RIBOSOMAL SUBUNIT PROTEIN UL4M"/>
    <property type="match status" value="1"/>
</dbReference>
<dbReference type="Pfam" id="PF00573">
    <property type="entry name" value="Ribosomal_L4"/>
    <property type="match status" value="1"/>
</dbReference>
<dbReference type="SUPFAM" id="SSF52166">
    <property type="entry name" value="Ribosomal protein L4"/>
    <property type="match status" value="1"/>
</dbReference>
<sequence>MNLKTVSGSAVELSEVAFGREFNEALVHQVVTAYLAGGRQGTRAHKSRADVSGGGKKPFRQKGTGRARAGSIRSPIWVGGGKTFAARPQDWSQKVNRKMYRGAMQCILAELVRQDRLVLVEEFAVAAPKTKELLAKLNDLNAARALIVTDAVDENLYLAARNLPHVDVVDATAIDPVSLIAFDKVVMSVAAAKKIEVELG</sequence>
<feature type="chain" id="PRO_1000142063" description="Large ribosomal subunit protein uL4">
    <location>
        <begin position="1"/>
        <end position="200"/>
    </location>
</feature>
<feature type="region of interest" description="Disordered" evidence="2">
    <location>
        <begin position="42"/>
        <end position="65"/>
    </location>
</feature>
<name>RL4_ACIBC</name>
<comment type="function">
    <text evidence="1">One of the primary rRNA binding proteins, this protein initially binds near the 5'-end of the 23S rRNA. It is important during the early stages of 50S assembly. It makes multiple contacts with different domains of the 23S rRNA in the assembled 50S subunit and ribosome.</text>
</comment>
<comment type="function">
    <text evidence="1">Forms part of the polypeptide exit tunnel.</text>
</comment>
<comment type="subunit">
    <text evidence="1">Part of the 50S ribosomal subunit.</text>
</comment>
<comment type="similarity">
    <text evidence="1">Belongs to the universal ribosomal protein uL4 family.</text>
</comment>
<organism>
    <name type="scientific">Acinetobacter baumannii (strain ACICU)</name>
    <dbReference type="NCBI Taxonomy" id="405416"/>
    <lineage>
        <taxon>Bacteria</taxon>
        <taxon>Pseudomonadati</taxon>
        <taxon>Pseudomonadota</taxon>
        <taxon>Gammaproteobacteria</taxon>
        <taxon>Moraxellales</taxon>
        <taxon>Moraxellaceae</taxon>
        <taxon>Acinetobacter</taxon>
        <taxon>Acinetobacter calcoaceticus/baumannii complex</taxon>
    </lineage>
</organism>
<accession>B2HZM1</accession>
<evidence type="ECO:0000255" key="1">
    <source>
        <dbReference type="HAMAP-Rule" id="MF_01328"/>
    </source>
</evidence>
<evidence type="ECO:0000256" key="2">
    <source>
        <dbReference type="SAM" id="MobiDB-lite"/>
    </source>
</evidence>
<evidence type="ECO:0000305" key="3"/>
<reference key="1">
    <citation type="journal article" date="2008" name="Antimicrob. Agents Chemother.">
        <title>Whole-genome pyrosequencing of an epidemic multidrug-resistant Acinetobacter baumannii strain belonging to the European clone II group.</title>
        <authorList>
            <person name="Iacono M."/>
            <person name="Villa L."/>
            <person name="Fortini D."/>
            <person name="Bordoni R."/>
            <person name="Imperi F."/>
            <person name="Bonnal R.J."/>
            <person name="Sicheritz-Ponten T."/>
            <person name="De Bellis G."/>
            <person name="Visca P."/>
            <person name="Cassone A."/>
            <person name="Carattoli A."/>
        </authorList>
    </citation>
    <scope>NUCLEOTIDE SEQUENCE [LARGE SCALE GENOMIC DNA]</scope>
    <source>
        <strain>ACICU</strain>
    </source>
</reference>
<protein>
    <recommendedName>
        <fullName evidence="1">Large ribosomal subunit protein uL4</fullName>
    </recommendedName>
    <alternativeName>
        <fullName evidence="3">50S ribosomal protein L4</fullName>
    </alternativeName>
</protein>